<evidence type="ECO:0000250" key="1"/>
<evidence type="ECO:0000305" key="2"/>
<name>GRN3_CYPCA</name>
<feature type="chain" id="PRO_0000150132" description="Granulin-3">
    <location>
        <begin position="1"/>
        <end position="57"/>
    </location>
</feature>
<feature type="disulfide bond" evidence="1">
    <location>
        <begin position="4"/>
        <end position="16"/>
    </location>
</feature>
<feature type="disulfide bond" evidence="1">
    <location>
        <begin position="10"/>
        <end position="26"/>
    </location>
</feature>
<comment type="function">
    <text>Granulins have possible cytokine-like activity. They may play a role in inflammation, wound repair, and tissue remodeling.</text>
</comment>
<comment type="subcellular location">
    <subcellularLocation>
        <location>Secreted</location>
    </subcellularLocation>
</comment>
<comment type="tissue specificity">
    <text>Ubiquitous.</text>
</comment>
<comment type="PTM">
    <text>Granulins are disulfide bridged.</text>
</comment>
<comment type="similarity">
    <text evidence="2">Belongs to the granulin family.</text>
</comment>
<accession>P81015</accession>
<keyword id="KW-0202">Cytokine</keyword>
<keyword id="KW-0903">Direct protein sequencing</keyword>
<keyword id="KW-1015">Disulfide bond</keyword>
<keyword id="KW-1185">Reference proteome</keyword>
<keyword id="KW-0964">Secreted</keyword>
<protein>
    <recommendedName>
        <fullName>Granulin-3</fullName>
    </recommendedName>
</protein>
<dbReference type="PIR" id="C46654">
    <property type="entry name" value="C46654"/>
</dbReference>
<dbReference type="SMR" id="P81015"/>
<dbReference type="Proteomes" id="UP000694384">
    <property type="component" value="Unplaced"/>
</dbReference>
<dbReference type="Proteomes" id="UP000694427">
    <property type="component" value="Unplaced"/>
</dbReference>
<dbReference type="Proteomes" id="UP000694700">
    <property type="component" value="Unplaced"/>
</dbReference>
<dbReference type="Proteomes" id="UP000694701">
    <property type="component" value="Unplaced"/>
</dbReference>
<dbReference type="Proteomes" id="UP001155660">
    <property type="component" value="Unplaced"/>
</dbReference>
<dbReference type="GO" id="GO:0005615">
    <property type="term" value="C:extracellular space"/>
    <property type="evidence" value="ECO:0007669"/>
    <property type="project" value="UniProtKB-KW"/>
</dbReference>
<dbReference type="GO" id="GO:0005125">
    <property type="term" value="F:cytokine activity"/>
    <property type="evidence" value="ECO:0007669"/>
    <property type="project" value="UniProtKB-KW"/>
</dbReference>
<dbReference type="Gene3D" id="2.10.25.160">
    <property type="entry name" value="Granulin"/>
    <property type="match status" value="1"/>
</dbReference>
<dbReference type="InterPro" id="IPR000118">
    <property type="entry name" value="Granulin"/>
</dbReference>
<dbReference type="InterPro" id="IPR039036">
    <property type="entry name" value="Granulin_fam"/>
</dbReference>
<dbReference type="InterPro" id="IPR037277">
    <property type="entry name" value="Granulin_sf"/>
</dbReference>
<dbReference type="PANTHER" id="PTHR12274">
    <property type="entry name" value="GRANULIN"/>
    <property type="match status" value="1"/>
</dbReference>
<dbReference type="PANTHER" id="PTHR12274:SF3">
    <property type="entry name" value="PROGRANULIN"/>
    <property type="match status" value="1"/>
</dbReference>
<dbReference type="Pfam" id="PF00396">
    <property type="entry name" value="Granulin"/>
    <property type="match status" value="1"/>
</dbReference>
<dbReference type="SMART" id="SM00277">
    <property type="entry name" value="GRAN"/>
    <property type="match status" value="1"/>
</dbReference>
<dbReference type="SUPFAM" id="SSF57277">
    <property type="entry name" value="Granulin repeat"/>
    <property type="match status" value="1"/>
</dbReference>
<reference key="1">
    <citation type="journal article" date="1993" name="J. Biol. Chem.">
        <title>Isolation and primary structure of the three major forms of granulin-like peptides from hematopoietic tissues of a teleost fish (Cyprinus carpio).</title>
        <authorList>
            <person name="Belcourt D.R."/>
            <person name="Lazure C."/>
            <person name="Bennett H.P."/>
        </authorList>
    </citation>
    <scope>PROTEIN SEQUENCE</scope>
    <source>
        <tissue>Kidney</tissue>
    </source>
</reference>
<organism>
    <name type="scientific">Cyprinus carpio</name>
    <name type="common">Common carp</name>
    <dbReference type="NCBI Taxonomy" id="7962"/>
    <lineage>
        <taxon>Eukaryota</taxon>
        <taxon>Metazoa</taxon>
        <taxon>Chordata</taxon>
        <taxon>Craniata</taxon>
        <taxon>Vertebrata</taxon>
        <taxon>Euteleostomi</taxon>
        <taxon>Actinopterygii</taxon>
        <taxon>Neopterygii</taxon>
        <taxon>Teleostei</taxon>
        <taxon>Ostariophysi</taxon>
        <taxon>Cypriniformes</taxon>
        <taxon>Cyprinidae</taxon>
        <taxon>Cyprininae</taxon>
        <taxon>Cyprinus</taxon>
    </lineage>
</organism>
<sequence length="57" mass="6315">VVFCDAGITCPSGTTCCRSPFGVWYCCPFLMGQCCRDGRHCCRHGYHCDSTSTLCLR</sequence>
<proteinExistence type="evidence at protein level"/>